<sequence>MKKLKINYLFIGILALLLAVALWPSIPWFGKADNRIAAIQARGELRVSTIHTPLTYNEINGKPFGLDYELAKQFADYLGVKLKVTVRQNISQLFDDLDNGNADLLAAGLVYNSERVKNYQPGPTYYSVSQQLVYKVGQYRPRTLGNLTAEQLTVAPGHVVVNDLQTLKETKFPELSWKVDDKKGSAELMEDVIEGKLDYTIADSVAISLFQRVHPELAVALDITDEQPVTWFSPLDGDNTLSAALLDFFNEMNEDGTLARIEEKYLGHGDDFDYVDTRTFLRAVDAVLPQLKPLFEKYAEEIDWRLLAAIAYQESHWDAQATSPTGVRGMMMLTKNTAQSLGITDRTDAEQSISGGVRYLQDMMSKVPESVPENERIWFALAAYNMGYAHMLDARALTAKTKGNPDSWADVKQRLPLLSQKPYYSKLTYGYARGHEAYAYVENIRKYQISLVGYLQEKEKQATEAAMQLAQDYPAVSPTELGKEKFPFLSFLSQSSSNYLTHSPSLLFSRKGSEEKQN</sequence>
<keyword id="KW-0998">Cell outer membrane</keyword>
<keyword id="KW-0961">Cell wall biogenesis/degradation</keyword>
<keyword id="KW-0456">Lyase</keyword>
<keyword id="KW-0472">Membrane</keyword>
<keyword id="KW-0732">Signal</keyword>
<gene>
    <name evidence="1" type="primary">mltF</name>
    <name type="ordered locus">EcHS_A2711</name>
</gene>
<reference key="1">
    <citation type="journal article" date="2008" name="J. Bacteriol.">
        <title>The pangenome structure of Escherichia coli: comparative genomic analysis of E. coli commensal and pathogenic isolates.</title>
        <authorList>
            <person name="Rasko D.A."/>
            <person name="Rosovitz M.J."/>
            <person name="Myers G.S.A."/>
            <person name="Mongodin E.F."/>
            <person name="Fricke W.F."/>
            <person name="Gajer P."/>
            <person name="Crabtree J."/>
            <person name="Sebaihia M."/>
            <person name="Thomson N.R."/>
            <person name="Chaudhuri R."/>
            <person name="Henderson I.R."/>
            <person name="Sperandio V."/>
            <person name="Ravel J."/>
        </authorList>
    </citation>
    <scope>NUCLEOTIDE SEQUENCE [LARGE SCALE GENOMIC DNA]</scope>
    <source>
        <strain>HS</strain>
    </source>
</reference>
<dbReference type="EC" id="4.2.2.n1" evidence="1"/>
<dbReference type="EMBL" id="CP000802">
    <property type="protein sequence ID" value="ABV06970.1"/>
    <property type="molecule type" value="Genomic_DNA"/>
</dbReference>
<dbReference type="RefSeq" id="WP_000734212.1">
    <property type="nucleotide sequence ID" value="NC_009800.1"/>
</dbReference>
<dbReference type="SMR" id="A8A366"/>
<dbReference type="CAZy" id="GH23">
    <property type="family name" value="Glycoside Hydrolase Family 23"/>
</dbReference>
<dbReference type="GeneID" id="75206251"/>
<dbReference type="KEGG" id="ecx:EcHS_A2711"/>
<dbReference type="HOGENOM" id="CLU_027494_0_1_6"/>
<dbReference type="GO" id="GO:0009279">
    <property type="term" value="C:cell outer membrane"/>
    <property type="evidence" value="ECO:0007669"/>
    <property type="project" value="UniProtKB-SubCell"/>
</dbReference>
<dbReference type="GO" id="GO:0008933">
    <property type="term" value="F:peptidoglycan lytic transglycosylase activity"/>
    <property type="evidence" value="ECO:0007669"/>
    <property type="project" value="UniProtKB-UniRule"/>
</dbReference>
<dbReference type="GO" id="GO:0016998">
    <property type="term" value="P:cell wall macromolecule catabolic process"/>
    <property type="evidence" value="ECO:0007669"/>
    <property type="project" value="UniProtKB-UniRule"/>
</dbReference>
<dbReference type="GO" id="GO:0071555">
    <property type="term" value="P:cell wall organization"/>
    <property type="evidence" value="ECO:0007669"/>
    <property type="project" value="UniProtKB-KW"/>
</dbReference>
<dbReference type="GO" id="GO:0009253">
    <property type="term" value="P:peptidoglycan catabolic process"/>
    <property type="evidence" value="ECO:0007669"/>
    <property type="project" value="TreeGrafter"/>
</dbReference>
<dbReference type="CDD" id="cd13403">
    <property type="entry name" value="MLTF-like"/>
    <property type="match status" value="1"/>
</dbReference>
<dbReference type="CDD" id="cd01009">
    <property type="entry name" value="PBP2_YfhD_N"/>
    <property type="match status" value="1"/>
</dbReference>
<dbReference type="FunFam" id="1.10.530.10:FF:000003">
    <property type="entry name" value="Membrane-bound lytic murein transglycosylase F"/>
    <property type="match status" value="1"/>
</dbReference>
<dbReference type="FunFam" id="3.40.190.10:FF:000051">
    <property type="entry name" value="Membrane-bound lytic murein transglycosylase F"/>
    <property type="match status" value="1"/>
</dbReference>
<dbReference type="Gene3D" id="1.10.530.10">
    <property type="match status" value="1"/>
</dbReference>
<dbReference type="Gene3D" id="3.40.190.10">
    <property type="entry name" value="Periplasmic binding protein-like II"/>
    <property type="match status" value="2"/>
</dbReference>
<dbReference type="HAMAP" id="MF_02016">
    <property type="entry name" value="MltF"/>
    <property type="match status" value="1"/>
</dbReference>
<dbReference type="InterPro" id="IPR023346">
    <property type="entry name" value="Lysozyme-like_dom_sf"/>
</dbReference>
<dbReference type="InterPro" id="IPR023703">
    <property type="entry name" value="MltF"/>
</dbReference>
<dbReference type="InterPro" id="IPR001638">
    <property type="entry name" value="Solute-binding_3/MltF_N"/>
</dbReference>
<dbReference type="InterPro" id="IPR000189">
    <property type="entry name" value="Transglyc_AS"/>
</dbReference>
<dbReference type="InterPro" id="IPR008258">
    <property type="entry name" value="Transglycosylase_SLT_dom_1"/>
</dbReference>
<dbReference type="NCBIfam" id="NF008112">
    <property type="entry name" value="PRK10859.1"/>
    <property type="match status" value="1"/>
</dbReference>
<dbReference type="PANTHER" id="PTHR35936">
    <property type="entry name" value="MEMBRANE-BOUND LYTIC MUREIN TRANSGLYCOSYLASE F"/>
    <property type="match status" value="1"/>
</dbReference>
<dbReference type="PANTHER" id="PTHR35936:SF32">
    <property type="entry name" value="MEMBRANE-BOUND LYTIC MUREIN TRANSGLYCOSYLASE F"/>
    <property type="match status" value="1"/>
</dbReference>
<dbReference type="Pfam" id="PF00497">
    <property type="entry name" value="SBP_bac_3"/>
    <property type="match status" value="1"/>
</dbReference>
<dbReference type="Pfam" id="PF01464">
    <property type="entry name" value="SLT"/>
    <property type="match status" value="1"/>
</dbReference>
<dbReference type="SMART" id="SM00062">
    <property type="entry name" value="PBPb"/>
    <property type="match status" value="1"/>
</dbReference>
<dbReference type="SUPFAM" id="SSF53955">
    <property type="entry name" value="Lysozyme-like"/>
    <property type="match status" value="1"/>
</dbReference>
<dbReference type="SUPFAM" id="SSF53850">
    <property type="entry name" value="Periplasmic binding protein-like II"/>
    <property type="match status" value="1"/>
</dbReference>
<dbReference type="PROSITE" id="PS00922">
    <property type="entry name" value="TRANSGLYCOSYLASE"/>
    <property type="match status" value="1"/>
</dbReference>
<comment type="function">
    <text evidence="1">Murein-degrading enzyme that degrades murein glycan strands and insoluble, high-molecular weight murein sacculi, with the concomitant formation of a 1,6-anhydromuramoyl product. Lytic transglycosylases (LTs) play an integral role in the metabolism of the peptidoglycan (PG) sacculus. Their lytic action creates space within the PG sacculus to allow for its expansion as well as for the insertion of various structures such as secretion systems and flagella.</text>
</comment>
<comment type="catalytic activity">
    <reaction evidence="1">
        <text>Exolytic cleavage of the (1-&gt;4)-beta-glycosidic linkage between N-acetylmuramic acid (MurNAc) and N-acetylglucosamine (GlcNAc) residues in peptidoglycan, from either the reducing or the non-reducing ends of the peptidoglycan chains, with concomitant formation of a 1,6-anhydrobond in the MurNAc residue.</text>
        <dbReference type="EC" id="4.2.2.n1"/>
    </reaction>
</comment>
<comment type="subcellular location">
    <subcellularLocation>
        <location>Cell outer membrane</location>
        <topology>Peripheral membrane protein</topology>
    </subcellularLocation>
    <text evidence="1">Attached to the inner leaflet of the outer membrane.</text>
</comment>
<comment type="domain">
    <text evidence="1">The N-terminal domain does not have lytic activity and probably modulates enzymatic activity. The C-terminal domain is the catalytic active domain.</text>
</comment>
<comment type="similarity">
    <text evidence="1">In the N-terminal section; belongs to the bacterial solute-binding protein 3 family.</text>
</comment>
<comment type="similarity">
    <text evidence="1">In the C-terminal section; belongs to the transglycosylase Slt family.</text>
</comment>
<organism>
    <name type="scientific">Escherichia coli O9:H4 (strain HS)</name>
    <dbReference type="NCBI Taxonomy" id="331112"/>
    <lineage>
        <taxon>Bacteria</taxon>
        <taxon>Pseudomonadati</taxon>
        <taxon>Pseudomonadota</taxon>
        <taxon>Gammaproteobacteria</taxon>
        <taxon>Enterobacterales</taxon>
        <taxon>Enterobacteriaceae</taxon>
        <taxon>Escherichia</taxon>
    </lineage>
</organism>
<feature type="signal peptide" evidence="1">
    <location>
        <begin position="1"/>
        <end position="21"/>
    </location>
</feature>
<feature type="chain" id="PRO_0000353930" description="Membrane-bound lytic murein transglycosylase F">
    <location>
        <begin position="22"/>
        <end position="518"/>
    </location>
</feature>
<feature type="region of interest" description="Non-LT domain" evidence="1">
    <location>
        <begin position="22"/>
        <end position="269"/>
    </location>
</feature>
<feature type="region of interest" description="LT domain" evidence="1">
    <location>
        <begin position="270"/>
        <end position="518"/>
    </location>
</feature>
<feature type="active site" evidence="1">
    <location>
        <position position="314"/>
    </location>
</feature>
<protein>
    <recommendedName>
        <fullName evidence="1">Membrane-bound lytic murein transglycosylase F</fullName>
        <ecNumber evidence="1">4.2.2.n1</ecNumber>
    </recommendedName>
    <alternativeName>
        <fullName evidence="1">Murein lyase F</fullName>
    </alternativeName>
</protein>
<name>MLTF_ECOHS</name>
<evidence type="ECO:0000255" key="1">
    <source>
        <dbReference type="HAMAP-Rule" id="MF_02016"/>
    </source>
</evidence>
<accession>A8A366</accession>
<proteinExistence type="inferred from homology"/>